<accession>Q6G4F8</accession>
<dbReference type="EMBL" id="BX897699">
    <property type="protein sequence ID" value="CAF27196.1"/>
    <property type="molecule type" value="Genomic_DNA"/>
</dbReference>
<dbReference type="RefSeq" id="WP_011180323.1">
    <property type="nucleotide sequence ID" value="NZ_LRIJ02000001.1"/>
</dbReference>
<dbReference type="PaxDb" id="283166-BH03860"/>
<dbReference type="EnsemblBacteria" id="CAF27196">
    <property type="protein sequence ID" value="CAF27196"/>
    <property type="gene ID" value="BH03860"/>
</dbReference>
<dbReference type="GeneID" id="92985043"/>
<dbReference type="KEGG" id="bhe:BH03860"/>
<dbReference type="eggNOG" id="COG1970">
    <property type="taxonomic scope" value="Bacteria"/>
</dbReference>
<dbReference type="OrthoDB" id="9810350at2"/>
<dbReference type="Proteomes" id="UP000000421">
    <property type="component" value="Chromosome"/>
</dbReference>
<dbReference type="GO" id="GO:0005886">
    <property type="term" value="C:plasma membrane"/>
    <property type="evidence" value="ECO:0007669"/>
    <property type="project" value="UniProtKB-SubCell"/>
</dbReference>
<dbReference type="GO" id="GO:0008381">
    <property type="term" value="F:mechanosensitive monoatomic ion channel activity"/>
    <property type="evidence" value="ECO:0007669"/>
    <property type="project" value="UniProtKB-UniRule"/>
</dbReference>
<dbReference type="Gene3D" id="1.10.1200.120">
    <property type="entry name" value="Large-conductance mechanosensitive channel, MscL, domain 1"/>
    <property type="match status" value="1"/>
</dbReference>
<dbReference type="HAMAP" id="MF_00115">
    <property type="entry name" value="MscL"/>
    <property type="match status" value="1"/>
</dbReference>
<dbReference type="InterPro" id="IPR019823">
    <property type="entry name" value="Mechanosensitive_channel_CS"/>
</dbReference>
<dbReference type="InterPro" id="IPR001185">
    <property type="entry name" value="MS_channel"/>
</dbReference>
<dbReference type="InterPro" id="IPR037673">
    <property type="entry name" value="MSC/AndL"/>
</dbReference>
<dbReference type="InterPro" id="IPR036019">
    <property type="entry name" value="MscL_channel"/>
</dbReference>
<dbReference type="NCBIfam" id="TIGR00220">
    <property type="entry name" value="mscL"/>
    <property type="match status" value="1"/>
</dbReference>
<dbReference type="NCBIfam" id="NF001843">
    <property type="entry name" value="PRK00567.1-4"/>
    <property type="match status" value="1"/>
</dbReference>
<dbReference type="NCBIfam" id="NF010557">
    <property type="entry name" value="PRK13952.1"/>
    <property type="match status" value="1"/>
</dbReference>
<dbReference type="PANTHER" id="PTHR30266:SF2">
    <property type="entry name" value="LARGE-CONDUCTANCE MECHANOSENSITIVE CHANNEL"/>
    <property type="match status" value="1"/>
</dbReference>
<dbReference type="PANTHER" id="PTHR30266">
    <property type="entry name" value="MECHANOSENSITIVE CHANNEL MSCL"/>
    <property type="match status" value="1"/>
</dbReference>
<dbReference type="Pfam" id="PF01741">
    <property type="entry name" value="MscL"/>
    <property type="match status" value="1"/>
</dbReference>
<dbReference type="PRINTS" id="PR01264">
    <property type="entry name" value="MECHCHANNEL"/>
</dbReference>
<dbReference type="SUPFAM" id="SSF81330">
    <property type="entry name" value="Gated mechanosensitive channel"/>
    <property type="match status" value="1"/>
</dbReference>
<dbReference type="PROSITE" id="PS01327">
    <property type="entry name" value="MSCL"/>
    <property type="match status" value="1"/>
</dbReference>
<evidence type="ECO:0000255" key="1">
    <source>
        <dbReference type="HAMAP-Rule" id="MF_00115"/>
    </source>
</evidence>
<organism>
    <name type="scientific">Bartonella henselae (strain ATCC 49882 / DSM 28221 / CCUG 30454 / Houston 1)</name>
    <name type="common">Rochalimaea henselae</name>
    <dbReference type="NCBI Taxonomy" id="283166"/>
    <lineage>
        <taxon>Bacteria</taxon>
        <taxon>Pseudomonadati</taxon>
        <taxon>Pseudomonadota</taxon>
        <taxon>Alphaproteobacteria</taxon>
        <taxon>Hyphomicrobiales</taxon>
        <taxon>Bartonellaceae</taxon>
        <taxon>Bartonella</taxon>
    </lineage>
</organism>
<comment type="function">
    <text evidence="1">Channel that opens in response to stretch forces in the membrane lipid bilayer. May participate in the regulation of osmotic pressure changes within the cell.</text>
</comment>
<comment type="subunit">
    <text evidence="1">Homopentamer.</text>
</comment>
<comment type="subcellular location">
    <subcellularLocation>
        <location evidence="1">Cell inner membrane</location>
        <topology evidence="1">Multi-pass membrane protein</topology>
    </subcellularLocation>
</comment>
<comment type="similarity">
    <text evidence="1">Belongs to the MscL family.</text>
</comment>
<keyword id="KW-0997">Cell inner membrane</keyword>
<keyword id="KW-1003">Cell membrane</keyword>
<keyword id="KW-0407">Ion channel</keyword>
<keyword id="KW-0406">Ion transport</keyword>
<keyword id="KW-0472">Membrane</keyword>
<keyword id="KW-0812">Transmembrane</keyword>
<keyword id="KW-1133">Transmembrane helix</keyword>
<keyword id="KW-0813">Transport</keyword>
<gene>
    <name evidence="1" type="primary">mscL</name>
    <name type="ordered locus">BH03860</name>
</gene>
<proteinExistence type="inferred from homology"/>
<sequence>MLKEFKEFALKGNMIDLAIGVIIGGAFGGLVNSIVNDIFMPIIGLITGGIDFSNMFIQLAGEKQATLSAAKAAGATISYGNFITLLINFLIIAWVLFLFVKSMNKIRRKQEEEETSKKMSLEQQLLSEIRDLLAKKK</sequence>
<reference key="1">
    <citation type="journal article" date="2004" name="Proc. Natl. Acad. Sci. U.S.A.">
        <title>The louse-borne human pathogen Bartonella quintana is a genomic derivative of the zoonotic agent Bartonella henselae.</title>
        <authorList>
            <person name="Alsmark U.C.M."/>
            <person name="Frank A.C."/>
            <person name="Karlberg E.O."/>
            <person name="Legault B.-A."/>
            <person name="Ardell D.H."/>
            <person name="Canbaeck B."/>
            <person name="Eriksson A.-S."/>
            <person name="Naeslund A.K."/>
            <person name="Handley S.A."/>
            <person name="Huvet M."/>
            <person name="La Scola B."/>
            <person name="Holmberg M."/>
            <person name="Andersson S.G.E."/>
        </authorList>
    </citation>
    <scope>NUCLEOTIDE SEQUENCE [LARGE SCALE GENOMIC DNA]</scope>
    <source>
        <strain>ATCC 49882 / DSM 28221 / CCUG 30454 / Houston 1</strain>
    </source>
</reference>
<feature type="chain" id="PRO_0000237978" description="Large-conductance mechanosensitive channel">
    <location>
        <begin position="1"/>
        <end position="137"/>
    </location>
</feature>
<feature type="transmembrane region" description="Helical" evidence="1">
    <location>
        <begin position="15"/>
        <end position="35"/>
    </location>
</feature>
<feature type="transmembrane region" description="Helical" evidence="1">
    <location>
        <begin position="38"/>
        <end position="58"/>
    </location>
</feature>
<feature type="transmembrane region" description="Helical" evidence="1">
    <location>
        <begin position="80"/>
        <end position="100"/>
    </location>
</feature>
<protein>
    <recommendedName>
        <fullName evidence="1">Large-conductance mechanosensitive channel</fullName>
    </recommendedName>
</protein>
<name>MSCL_BARHE</name>